<protein>
    <recommendedName>
        <fullName evidence="1">Phosphomethylpyrimidine synthase</fullName>
        <ecNumber evidence="1">4.1.99.17</ecNumber>
    </recommendedName>
    <alternativeName>
        <fullName evidence="1">Hydroxymethylpyrimidine phosphate synthase</fullName>
        <shortName evidence="1">HMP-P synthase</shortName>
        <shortName evidence="1">HMP-phosphate synthase</shortName>
        <shortName evidence="1">HMPP synthase</shortName>
    </alternativeName>
    <alternativeName>
        <fullName evidence="1">Thiamine biosynthesis protein ThiC</fullName>
    </alternativeName>
</protein>
<keyword id="KW-0004">4Fe-4S</keyword>
<keyword id="KW-0408">Iron</keyword>
<keyword id="KW-0411">Iron-sulfur</keyword>
<keyword id="KW-0456">Lyase</keyword>
<keyword id="KW-0479">Metal-binding</keyword>
<keyword id="KW-0949">S-adenosyl-L-methionine</keyword>
<keyword id="KW-0784">Thiamine biosynthesis</keyword>
<keyword id="KW-0862">Zinc</keyword>
<dbReference type="EC" id="4.1.99.17" evidence="1"/>
<dbReference type="EMBL" id="CP001399">
    <property type="protein sequence ID" value="ACP34746.1"/>
    <property type="molecule type" value="Genomic_DNA"/>
</dbReference>
<dbReference type="RefSeq" id="WP_009992597.1">
    <property type="nucleotide sequence ID" value="NC_012589.1"/>
</dbReference>
<dbReference type="SMR" id="C3MMC3"/>
<dbReference type="GeneID" id="7941174"/>
<dbReference type="KEGG" id="sis:LS215_0666"/>
<dbReference type="HOGENOM" id="CLU_013181_2_2_2"/>
<dbReference type="OrthoDB" id="335406at2157"/>
<dbReference type="UniPathway" id="UPA00060"/>
<dbReference type="Proteomes" id="UP000001747">
    <property type="component" value="Chromosome"/>
</dbReference>
<dbReference type="GO" id="GO:0051539">
    <property type="term" value="F:4 iron, 4 sulfur cluster binding"/>
    <property type="evidence" value="ECO:0007669"/>
    <property type="project" value="UniProtKB-KW"/>
</dbReference>
<dbReference type="GO" id="GO:0016830">
    <property type="term" value="F:carbon-carbon lyase activity"/>
    <property type="evidence" value="ECO:0007669"/>
    <property type="project" value="InterPro"/>
</dbReference>
<dbReference type="GO" id="GO:0008270">
    <property type="term" value="F:zinc ion binding"/>
    <property type="evidence" value="ECO:0007669"/>
    <property type="project" value="UniProtKB-UniRule"/>
</dbReference>
<dbReference type="GO" id="GO:0009228">
    <property type="term" value="P:thiamine biosynthetic process"/>
    <property type="evidence" value="ECO:0007669"/>
    <property type="project" value="UniProtKB-KW"/>
</dbReference>
<dbReference type="GO" id="GO:0009229">
    <property type="term" value="P:thiamine diphosphate biosynthetic process"/>
    <property type="evidence" value="ECO:0007669"/>
    <property type="project" value="UniProtKB-UniRule"/>
</dbReference>
<dbReference type="Gene3D" id="3.20.20.540">
    <property type="entry name" value="Radical SAM ThiC family, central domain"/>
    <property type="match status" value="1"/>
</dbReference>
<dbReference type="HAMAP" id="MF_00089">
    <property type="entry name" value="ThiC"/>
    <property type="match status" value="1"/>
</dbReference>
<dbReference type="InterPro" id="IPR037509">
    <property type="entry name" value="ThiC"/>
</dbReference>
<dbReference type="InterPro" id="IPR038521">
    <property type="entry name" value="ThiC/Bza_core_dom"/>
</dbReference>
<dbReference type="InterPro" id="IPR002817">
    <property type="entry name" value="ThiC/BzaA/B"/>
</dbReference>
<dbReference type="NCBIfam" id="NF009895">
    <property type="entry name" value="PRK13352.1"/>
    <property type="match status" value="1"/>
</dbReference>
<dbReference type="NCBIfam" id="TIGR00190">
    <property type="entry name" value="thiC"/>
    <property type="match status" value="1"/>
</dbReference>
<dbReference type="PANTHER" id="PTHR30557:SF1">
    <property type="entry name" value="PHOSPHOMETHYLPYRIMIDINE SYNTHASE, CHLOROPLASTIC"/>
    <property type="match status" value="1"/>
</dbReference>
<dbReference type="PANTHER" id="PTHR30557">
    <property type="entry name" value="THIAMINE BIOSYNTHESIS PROTEIN THIC"/>
    <property type="match status" value="1"/>
</dbReference>
<dbReference type="Pfam" id="PF01964">
    <property type="entry name" value="ThiC_Rad_SAM"/>
    <property type="match status" value="1"/>
</dbReference>
<dbReference type="SFLD" id="SFLDF00407">
    <property type="entry name" value="phosphomethylpyrimidine_syntha"/>
    <property type="match status" value="1"/>
</dbReference>
<dbReference type="SFLD" id="SFLDS00113">
    <property type="entry name" value="Radical_SAM_Phosphomethylpyrim"/>
    <property type="match status" value="1"/>
</dbReference>
<accession>C3MMC3</accession>
<evidence type="ECO:0000255" key="1">
    <source>
        <dbReference type="HAMAP-Rule" id="MF_00089"/>
    </source>
</evidence>
<comment type="function">
    <text evidence="1">Catalyzes the synthesis of the hydroxymethylpyrimidine phosphate (HMP-P) moiety of thiamine from aminoimidazole ribotide (AIR) in a radical S-adenosyl-L-methionine (SAM)-dependent reaction.</text>
</comment>
<comment type="catalytic activity">
    <reaction evidence="1">
        <text>5-amino-1-(5-phospho-beta-D-ribosyl)imidazole + S-adenosyl-L-methionine = 4-amino-2-methyl-5-(phosphooxymethyl)pyrimidine + CO + 5'-deoxyadenosine + formate + L-methionine + 3 H(+)</text>
        <dbReference type="Rhea" id="RHEA:24840"/>
        <dbReference type="ChEBI" id="CHEBI:15378"/>
        <dbReference type="ChEBI" id="CHEBI:15740"/>
        <dbReference type="ChEBI" id="CHEBI:17245"/>
        <dbReference type="ChEBI" id="CHEBI:17319"/>
        <dbReference type="ChEBI" id="CHEBI:57844"/>
        <dbReference type="ChEBI" id="CHEBI:58354"/>
        <dbReference type="ChEBI" id="CHEBI:59789"/>
        <dbReference type="ChEBI" id="CHEBI:137981"/>
        <dbReference type="EC" id="4.1.99.17"/>
    </reaction>
</comment>
<comment type="cofactor">
    <cofactor evidence="1">
        <name>[4Fe-4S] cluster</name>
        <dbReference type="ChEBI" id="CHEBI:49883"/>
    </cofactor>
    <text evidence="1">Binds 1 [4Fe-4S] cluster per subunit. The cluster is coordinated with 3 cysteines and an exchangeable S-adenosyl-L-methionine.</text>
</comment>
<comment type="pathway">
    <text evidence="1">Cofactor biosynthesis; thiamine diphosphate biosynthesis.</text>
</comment>
<comment type="similarity">
    <text evidence="1">Belongs to the ThiC family.</text>
</comment>
<proteinExistence type="inferred from homology"/>
<name>THIC_SACI2</name>
<sequence>MGIIDEAKRGQITDEMRAISKLEGIPVEKVRNRISEGKIMLIRNAKYPSRKLVPIGKGLTTKVNVNIGTSSEVVDLDMELQKVKVANKWGDTLMDLSTGGDLDAIRRDIIKASDLPVGTVPVYQIFIESFKKKSGGAYFTEDELLNTVEKHLKDGVAFMTIHAGITKDLAIRALKSDRIIPIVSRGGDMIAGWMIHNNSENPYRKNWDYVLEMFKEYDAVISLGDALRPGATGDAHDEFQIGELLETARLVKSALQKGVQVMVEGPGHVPLNEIAWDVKLMKKLTGGVPYYVLGPLPIDVGAPYDHIASAIGAAISSASGVDLLCYLTPAEHLGLPTVKQVEEGAIAYRIAAHAGDVVKLGRKARKWDDEVSYYRGKLDWENMISKLIDPQRAYQVYTQFGTPKVKACTMCGGYCPMMWAMDQVRKIGSSSSL</sequence>
<feature type="chain" id="PRO_1000202655" description="Phosphomethylpyrimidine synthase">
    <location>
        <begin position="1"/>
        <end position="433"/>
    </location>
</feature>
<feature type="binding site" evidence="1">
    <location>
        <position position="66"/>
    </location>
    <ligand>
        <name>substrate</name>
    </ligand>
</feature>
<feature type="binding site" evidence="1">
    <location>
        <position position="94"/>
    </location>
    <ligand>
        <name>substrate</name>
    </ligand>
</feature>
<feature type="binding site" evidence="1">
    <location>
        <position position="123"/>
    </location>
    <ligand>
        <name>substrate</name>
    </ligand>
</feature>
<feature type="binding site" evidence="1">
    <location>
        <position position="162"/>
    </location>
    <ligand>
        <name>substrate</name>
    </ligand>
</feature>
<feature type="binding site" evidence="1">
    <location>
        <begin position="184"/>
        <end position="186"/>
    </location>
    <ligand>
        <name>substrate</name>
    </ligand>
</feature>
<feature type="binding site" evidence="1">
    <location>
        <begin position="225"/>
        <end position="228"/>
    </location>
    <ligand>
        <name>substrate</name>
    </ligand>
</feature>
<feature type="binding site" evidence="1">
    <location>
        <position position="264"/>
    </location>
    <ligand>
        <name>substrate</name>
    </ligand>
</feature>
<feature type="binding site" evidence="1">
    <location>
        <position position="268"/>
    </location>
    <ligand>
        <name>Zn(2+)</name>
        <dbReference type="ChEBI" id="CHEBI:29105"/>
    </ligand>
</feature>
<feature type="binding site" evidence="1">
    <location>
        <position position="291"/>
    </location>
    <ligand>
        <name>substrate</name>
    </ligand>
</feature>
<feature type="binding site" evidence="1">
    <location>
        <position position="332"/>
    </location>
    <ligand>
        <name>Zn(2+)</name>
        <dbReference type="ChEBI" id="CHEBI:29105"/>
    </ligand>
</feature>
<feature type="binding site" evidence="1">
    <location>
        <position position="408"/>
    </location>
    <ligand>
        <name>[4Fe-4S] cluster</name>
        <dbReference type="ChEBI" id="CHEBI:49883"/>
        <note>4Fe-4S-S-AdoMet</note>
    </ligand>
</feature>
<feature type="binding site" evidence="1">
    <location>
        <position position="411"/>
    </location>
    <ligand>
        <name>[4Fe-4S] cluster</name>
        <dbReference type="ChEBI" id="CHEBI:49883"/>
        <note>4Fe-4S-S-AdoMet</note>
    </ligand>
</feature>
<feature type="binding site" evidence="1">
    <location>
        <position position="415"/>
    </location>
    <ligand>
        <name>[4Fe-4S] cluster</name>
        <dbReference type="ChEBI" id="CHEBI:49883"/>
        <note>4Fe-4S-S-AdoMet</note>
    </ligand>
</feature>
<gene>
    <name evidence="1" type="primary">thiC</name>
    <name type="ordered locus">LS215_0666</name>
</gene>
<reference key="1">
    <citation type="journal article" date="2009" name="Proc. Natl. Acad. Sci. U.S.A.">
        <title>Biogeography of the Sulfolobus islandicus pan-genome.</title>
        <authorList>
            <person name="Reno M.L."/>
            <person name="Held N.L."/>
            <person name="Fields C.J."/>
            <person name="Burke P.V."/>
            <person name="Whitaker R.J."/>
        </authorList>
    </citation>
    <scope>NUCLEOTIDE SEQUENCE [LARGE SCALE GENOMIC DNA]</scope>
    <source>
        <strain>L.S.2.15 / Lassen #1</strain>
    </source>
</reference>
<organism>
    <name type="scientific">Saccharolobus islandicus (strain L.S.2.15 / Lassen #1)</name>
    <name type="common">Sulfolobus islandicus</name>
    <dbReference type="NCBI Taxonomy" id="429572"/>
    <lineage>
        <taxon>Archaea</taxon>
        <taxon>Thermoproteota</taxon>
        <taxon>Thermoprotei</taxon>
        <taxon>Sulfolobales</taxon>
        <taxon>Sulfolobaceae</taxon>
        <taxon>Saccharolobus</taxon>
    </lineage>
</organism>